<comment type="function">
    <text evidence="1">Contacts the emerging nascent chain on the ribosome.</text>
</comment>
<comment type="subunit">
    <text evidence="1">Homodimer. Interacts with the ribosome. Binds ribosomal RNA.</text>
</comment>
<comment type="similarity">
    <text evidence="1">Belongs to the NAC-alpha family.</text>
</comment>
<dbReference type="EMBL" id="AE017261">
    <property type="protein sequence ID" value="AAT43119.1"/>
    <property type="molecule type" value="Genomic_DNA"/>
</dbReference>
<dbReference type="RefSeq" id="WP_011177335.1">
    <property type="nucleotide sequence ID" value="NC_005877.1"/>
</dbReference>
<dbReference type="SMR" id="Q6L1N3"/>
<dbReference type="STRING" id="263820.PTO0534"/>
<dbReference type="PaxDb" id="263820-PTO0534"/>
<dbReference type="GeneID" id="2843976"/>
<dbReference type="KEGG" id="pto:PTO0534"/>
<dbReference type="PATRIC" id="fig|263820.9.peg.562"/>
<dbReference type="eggNOG" id="arCOG04061">
    <property type="taxonomic scope" value="Archaea"/>
</dbReference>
<dbReference type="HOGENOM" id="CLU_146475_1_0_2"/>
<dbReference type="InParanoid" id="Q6L1N3"/>
<dbReference type="OrthoDB" id="53273at2157"/>
<dbReference type="Proteomes" id="UP000000438">
    <property type="component" value="Chromosome"/>
</dbReference>
<dbReference type="GO" id="GO:0003723">
    <property type="term" value="F:RNA binding"/>
    <property type="evidence" value="ECO:0007669"/>
    <property type="project" value="UniProtKB-UniRule"/>
</dbReference>
<dbReference type="GO" id="GO:0015031">
    <property type="term" value="P:protein transport"/>
    <property type="evidence" value="ECO:0007669"/>
    <property type="project" value="UniProtKB-UniRule"/>
</dbReference>
<dbReference type="CDD" id="cd14359">
    <property type="entry name" value="UBA_AeNAC"/>
    <property type="match status" value="1"/>
</dbReference>
<dbReference type="Gene3D" id="1.10.8.10">
    <property type="entry name" value="DNA helicase RuvA subunit, C-terminal domain"/>
    <property type="match status" value="1"/>
</dbReference>
<dbReference type="Gene3D" id="2.20.70.30">
    <property type="entry name" value="Nascent polypeptide-associated complex domain"/>
    <property type="match status" value="1"/>
</dbReference>
<dbReference type="HAMAP" id="MF_00814">
    <property type="entry name" value="NAC_arch"/>
    <property type="match status" value="1"/>
</dbReference>
<dbReference type="InterPro" id="IPR044034">
    <property type="entry name" value="NAC-like_UBA"/>
</dbReference>
<dbReference type="InterPro" id="IPR038187">
    <property type="entry name" value="NAC_A/B_dom_sf"/>
</dbReference>
<dbReference type="InterPro" id="IPR005231">
    <property type="entry name" value="NAC_arc"/>
</dbReference>
<dbReference type="InterPro" id="IPR002715">
    <property type="entry name" value="Nas_poly-pep-assoc_cplx_dom"/>
</dbReference>
<dbReference type="InterPro" id="IPR009060">
    <property type="entry name" value="UBA-like_sf"/>
</dbReference>
<dbReference type="NCBIfam" id="TIGR00264">
    <property type="entry name" value="archaeal-type nascent polypeptide-associated complex protein"/>
    <property type="match status" value="1"/>
</dbReference>
<dbReference type="Pfam" id="PF01849">
    <property type="entry name" value="NAC"/>
    <property type="match status" value="1"/>
</dbReference>
<dbReference type="Pfam" id="PF19026">
    <property type="entry name" value="UBA_HYPK"/>
    <property type="match status" value="1"/>
</dbReference>
<dbReference type="SMART" id="SM01407">
    <property type="entry name" value="NAC"/>
    <property type="match status" value="1"/>
</dbReference>
<dbReference type="SUPFAM" id="SSF46934">
    <property type="entry name" value="UBA-like"/>
    <property type="match status" value="1"/>
</dbReference>
<dbReference type="PROSITE" id="PS51151">
    <property type="entry name" value="NAC_AB"/>
    <property type="match status" value="1"/>
</dbReference>
<evidence type="ECO:0000255" key="1">
    <source>
        <dbReference type="HAMAP-Rule" id="MF_00814"/>
    </source>
</evidence>
<organism>
    <name type="scientific">Picrophilus torridus (strain ATCC 700027 / DSM 9790 / JCM 10055 / NBRC 100828 / KAW 2/3)</name>
    <dbReference type="NCBI Taxonomy" id="1122961"/>
    <lineage>
        <taxon>Archaea</taxon>
        <taxon>Methanobacteriati</taxon>
        <taxon>Thermoplasmatota</taxon>
        <taxon>Thermoplasmata</taxon>
        <taxon>Thermoplasmatales</taxon>
        <taxon>Picrophilaceae</taxon>
        <taxon>Picrophilus</taxon>
    </lineage>
</organism>
<sequence length="108" mass="12204">MNPREIRRMMAQMGIKSTEMSDVKQVIFKGKDKDYIIDNASVTMIEAQGQKTFQVLGNLREVKKEVEQYSEDDIKLVMEQAKVTREKAIEALKAANGEPAQAILNLTS</sequence>
<proteinExistence type="inferred from homology"/>
<reference key="1">
    <citation type="journal article" date="2004" name="Proc. Natl. Acad. Sci. U.S.A.">
        <title>Genome sequence of Picrophilus torridus and its implications for life around pH 0.</title>
        <authorList>
            <person name="Fuetterer O."/>
            <person name="Angelov A."/>
            <person name="Liesegang H."/>
            <person name="Gottschalk G."/>
            <person name="Schleper C."/>
            <person name="Schepers B."/>
            <person name="Dock C."/>
            <person name="Antranikian G."/>
            <person name="Liebl W."/>
        </authorList>
    </citation>
    <scope>NUCLEOTIDE SEQUENCE [LARGE SCALE GENOMIC DNA]</scope>
    <source>
        <strain>ATCC 700027 / DSM 9790 / JCM 10055 / NBRC 100828 / KAW 2/3</strain>
    </source>
</reference>
<keyword id="KW-0653">Protein transport</keyword>
<keyword id="KW-0694">RNA-binding</keyword>
<keyword id="KW-0813">Transport</keyword>
<protein>
    <recommendedName>
        <fullName evidence="1">Nascent polypeptide-associated complex protein</fullName>
    </recommendedName>
</protein>
<gene>
    <name evidence="1" type="primary">nac</name>
    <name type="ordered locus">PTO0534</name>
</gene>
<feature type="chain" id="PRO_0000135606" description="Nascent polypeptide-associated complex protein">
    <location>
        <begin position="1"/>
        <end position="108"/>
    </location>
</feature>
<feature type="domain" description="NAC-A/B" evidence="1">
    <location>
        <begin position="1"/>
        <end position="68"/>
    </location>
</feature>
<name>NAC_PICTO</name>
<accession>Q6L1N3</accession>